<sequence>CAPECRSFCPDQKCLKDCGCI</sequence>
<protein>
    <recommendedName>
        <fullName evidence="2">Peptide Hact-2</fullName>
    </recommendedName>
</protein>
<evidence type="ECO:0000269" key="1">
    <source>
    </source>
</evidence>
<evidence type="ECO:0000303" key="2">
    <source>
    </source>
</evidence>
<evidence type="ECO:0000305" key="3">
    <source>
    </source>
</evidence>
<evidence type="ECO:0000312" key="4">
    <source>
        <dbReference type="PDB" id="7LRW"/>
    </source>
</evidence>
<evidence type="ECO:0007744" key="5">
    <source>
        <dbReference type="PDB" id="7LRW"/>
    </source>
</evidence>
<proteinExistence type="evidence at protein level"/>
<comment type="function">
    <text evidence="1">Peptide of unknown function (PubMed:35829679). Does not exhibit antimicrobial activity against Escherichia coli and Staphylococcus aureus (PubMed:35829679). Promotes cell proliferation of human fibroblast skin cells (PubMed:35829679). Does not exhibit any effect on voltage-gated ion channels, including potassium, sodium, and calcium channels (PubMed:35829679).</text>
</comment>
<comment type="subcellular location">
    <subcellularLocation>
        <location evidence="1">Nematocyst</location>
    </subcellularLocation>
    <subcellularLocation>
        <location evidence="3">Secreted</location>
    </subcellularLocation>
</comment>
<comment type="tissue specificity">
    <text evidence="1">Expressed in tentacles.</text>
</comment>
<comment type="mass spectrometry"/>
<dbReference type="PDB" id="7LRW">
    <property type="method" value="NMR"/>
    <property type="chains" value="A=1-21"/>
</dbReference>
<dbReference type="PDBsum" id="7LRW"/>
<dbReference type="GO" id="GO:0005576">
    <property type="term" value="C:extracellular region"/>
    <property type="evidence" value="ECO:0007669"/>
    <property type="project" value="UniProtKB-SubCell"/>
</dbReference>
<dbReference type="GO" id="GO:0042151">
    <property type="term" value="C:nematocyst"/>
    <property type="evidence" value="ECO:0007669"/>
    <property type="project" value="UniProtKB-SubCell"/>
</dbReference>
<organism>
    <name type="scientific">Heliofungia actiniformis</name>
    <name type="common">Mushroom coral</name>
    <name type="synonym">Fungia actiniformis</name>
    <dbReference type="NCBI Taxonomy" id="75303"/>
    <lineage>
        <taxon>Eukaryota</taxon>
        <taxon>Metazoa</taxon>
        <taxon>Cnidaria</taxon>
        <taxon>Anthozoa</taxon>
        <taxon>Hexacorallia</taxon>
        <taxon>Scleractinia</taxon>
        <taxon>Fungiina</taxon>
        <taxon>Fungiidae</taxon>
        <taxon>Heliofungia</taxon>
    </lineage>
</organism>
<name>HACT2_HELAT</name>
<accession>C0HM69</accession>
<reference evidence="4" key="1">
    <citation type="journal article" date="2022" name="J. Nat. Prod.">
        <title>Newly Discovered Peptides from the Coral Heliofungia actiniformis Show Structural and Functional Diversity.</title>
        <authorList>
            <person name="Schmidt C.A."/>
            <person name="Cooke I."/>
            <person name="Wilson D.T."/>
            <person name="Miller D.J."/>
            <person name="Peigneur S."/>
            <person name="Tytgat J."/>
            <person name="Field M."/>
            <person name="Takjoo R."/>
            <person name="Smout M.J."/>
            <person name="Loukas A."/>
            <person name="Daly N.L."/>
        </authorList>
    </citation>
    <scope>PROTEIN SEQUENCE OF 2-20</scope>
    <scope>STRUCTURE BY NMR</scope>
    <scope>FUNCTION</scope>
    <scope>SUBCELLULAR LOCATION</scope>
    <scope>TISSUE SPECIFICITY</scope>
    <scope>MASS SPECTROMETRY</scope>
    <scope>DISULFIDE BONDS</scope>
</reference>
<keyword id="KW-0002">3D-structure</keyword>
<keyword id="KW-0903">Direct protein sequencing</keyword>
<keyword id="KW-1015">Disulfide bond</keyword>
<keyword id="KW-0166">Nematocyst</keyword>
<keyword id="KW-0964">Secreted</keyword>
<feature type="chain" id="PRO_0000458190" description="Peptide Hact-2">
    <location>
        <begin position="1"/>
        <end position="21"/>
    </location>
</feature>
<feature type="disulfide bond" evidence="1 5">
    <location>
        <begin position="1"/>
        <end position="18"/>
    </location>
</feature>
<feature type="disulfide bond" evidence="1 5">
    <location>
        <begin position="5"/>
        <end position="14"/>
    </location>
</feature>
<feature type="disulfide bond" evidence="1 5">
    <location>
        <begin position="9"/>
        <end position="20"/>
    </location>
</feature>